<accession>B6V870</accession>
<sequence length="373" mass="40677">MKLLSVLALSATATSVLGASIPVDTRAQKFLIELAPGETRWVTEEEKWELKQKGQDFFDITDEEVGFTAAVAQPAIAYPTSIRHADAVNAMIATLSKENMQRDLTKLSSFHNRYYKSDYGKQSATWLQQQVQAVINSSGASRYGAKVVSVRHNFVQHSIVATIPGRSPEIVVVGAHQDSINQRSPMTGRAPGADDNGSGSVTILEALRGVLQDQTIVQGKAANTIEFHWYAGEEAGLLGSQAIFANYKQTGKKVKGMLNQDMTGYIKGMVDRGLKVSFGIITDNVSTSLTSFIRMVITKYCSIPTIDTRCGYACSDHASANRNGYPSAMVAESPINLLDPHLHTDSDLISYLDFDHMIEHAKLVVGFVTELAK</sequence>
<feature type="signal peptide" evidence="2">
    <location>
        <begin position="1"/>
        <end position="18"/>
    </location>
</feature>
<feature type="chain" id="PRO_0000397765" description="Probable leucine aminopeptidase 1">
    <location>
        <begin position="19"/>
        <end position="373"/>
    </location>
</feature>
<feature type="binding site" evidence="1">
    <location>
        <position position="176"/>
    </location>
    <ligand>
        <name>Zn(2+)</name>
        <dbReference type="ChEBI" id="CHEBI:29105"/>
        <label>1</label>
    </ligand>
</feature>
<feature type="binding site" evidence="1">
    <location>
        <position position="195"/>
    </location>
    <ligand>
        <name>Zn(2+)</name>
        <dbReference type="ChEBI" id="CHEBI:29105"/>
        <label>1</label>
    </ligand>
</feature>
<feature type="binding site" evidence="1">
    <location>
        <position position="195"/>
    </location>
    <ligand>
        <name>Zn(2+)</name>
        <dbReference type="ChEBI" id="CHEBI:29105"/>
        <label>2</label>
        <note>catalytic</note>
    </ligand>
</feature>
<feature type="binding site" evidence="1">
    <location>
        <position position="234"/>
    </location>
    <ligand>
        <name>Zn(2+)</name>
        <dbReference type="ChEBI" id="CHEBI:29105"/>
        <label>2</label>
        <note>catalytic</note>
    </ligand>
</feature>
<feature type="binding site" evidence="1">
    <location>
        <position position="261"/>
    </location>
    <ligand>
        <name>Zn(2+)</name>
        <dbReference type="ChEBI" id="CHEBI:29105"/>
        <label>1</label>
    </ligand>
</feature>
<feature type="binding site" evidence="1">
    <location>
        <position position="343"/>
    </location>
    <ligand>
        <name>Zn(2+)</name>
        <dbReference type="ChEBI" id="CHEBI:29105"/>
        <label>2</label>
        <note>catalytic</note>
    </ligand>
</feature>
<feature type="glycosylation site" description="N-linked (GlcNAc...) asparagine" evidence="2">
    <location>
        <position position="136"/>
    </location>
</feature>
<feature type="glycosylation site" description="N-linked (GlcNAc...) asparagine" evidence="2">
    <location>
        <position position="196"/>
    </location>
</feature>
<feature type="glycosylation site" description="N-linked (GlcNAc...) asparagine" evidence="2">
    <location>
        <position position="284"/>
    </location>
</feature>
<feature type="disulfide bond" evidence="1">
    <location>
        <begin position="310"/>
        <end position="314"/>
    </location>
</feature>
<name>LAP1_TRITO</name>
<proteinExistence type="inferred from homology"/>
<comment type="function">
    <text evidence="1">Extracellular aminopeptidase which contributes to pathogenicity.</text>
</comment>
<comment type="cofactor">
    <cofactor evidence="1">
        <name>Zn(2+)</name>
        <dbReference type="ChEBI" id="CHEBI:29105"/>
    </cofactor>
    <text evidence="1">Binds 2 Zn(2+) ions per subunit.</text>
</comment>
<comment type="subunit">
    <text evidence="1">Monomer.</text>
</comment>
<comment type="subcellular location">
    <subcellularLocation>
        <location evidence="1">Secreted</location>
    </subcellularLocation>
</comment>
<comment type="similarity">
    <text evidence="3">Belongs to the peptidase M28 family. M28E subfamily.</text>
</comment>
<comment type="sequence caution" evidence="3">
    <conflict type="erroneous termination">
        <sequence resource="EMBL-CDS" id="ACJ06661"/>
    </conflict>
    <text>Truncated C-terminus.</text>
</comment>
<evidence type="ECO:0000250" key="1"/>
<evidence type="ECO:0000255" key="2"/>
<evidence type="ECO:0000305" key="3"/>
<gene>
    <name type="primary">LAP1</name>
</gene>
<reference key="1">
    <citation type="journal article" date="2010" name="Mycopathologia">
        <title>Divergence among an international population of Trichophyton tonsurans isolates.</title>
        <authorList>
            <person name="Abdel-Rahman S.M."/>
            <person name="Sugita T."/>
            <person name="Gonzalez G.M."/>
            <person name="Ellis D."/>
            <person name="Arabatzis M."/>
            <person name="Vella-Zahra L."/>
            <person name="Viguie-Vallanet C."/>
            <person name="Hiruma M."/>
            <person name="Leeder J.S."/>
            <person name="Preuett B."/>
        </authorList>
    </citation>
    <scope>NUCLEOTIDE SEQUENCE [GENOMIC DNA]</scope>
</reference>
<dbReference type="EC" id="3.4.11.-"/>
<dbReference type="EMBL" id="FJ267693">
    <property type="protein sequence ID" value="ACJ06661.1"/>
    <property type="status" value="ALT_TERM"/>
    <property type="molecule type" value="Genomic_DNA"/>
</dbReference>
<dbReference type="SMR" id="B6V870"/>
<dbReference type="GlyCosmos" id="B6V870">
    <property type="glycosylation" value="3 sites, No reported glycans"/>
</dbReference>
<dbReference type="VEuPathDB" id="FungiDB:TESG_07124"/>
<dbReference type="GO" id="GO:0005576">
    <property type="term" value="C:extracellular region"/>
    <property type="evidence" value="ECO:0007669"/>
    <property type="project" value="UniProtKB-SubCell"/>
</dbReference>
<dbReference type="GO" id="GO:0004177">
    <property type="term" value="F:aminopeptidase activity"/>
    <property type="evidence" value="ECO:0007669"/>
    <property type="project" value="UniProtKB-KW"/>
</dbReference>
<dbReference type="GO" id="GO:0046872">
    <property type="term" value="F:metal ion binding"/>
    <property type="evidence" value="ECO:0007669"/>
    <property type="project" value="UniProtKB-KW"/>
</dbReference>
<dbReference type="GO" id="GO:0008235">
    <property type="term" value="F:metalloexopeptidase activity"/>
    <property type="evidence" value="ECO:0007669"/>
    <property type="project" value="InterPro"/>
</dbReference>
<dbReference type="GO" id="GO:0006508">
    <property type="term" value="P:proteolysis"/>
    <property type="evidence" value="ECO:0007669"/>
    <property type="project" value="UniProtKB-KW"/>
</dbReference>
<dbReference type="CDD" id="cd03879">
    <property type="entry name" value="M28_AAP"/>
    <property type="match status" value="1"/>
</dbReference>
<dbReference type="FunFam" id="3.40.630.10:FF:000042">
    <property type="entry name" value="Peptide hydrolase"/>
    <property type="match status" value="1"/>
</dbReference>
<dbReference type="Gene3D" id="3.40.630.10">
    <property type="entry name" value="Zn peptidases"/>
    <property type="match status" value="1"/>
</dbReference>
<dbReference type="InterPro" id="IPR045175">
    <property type="entry name" value="M28_fam"/>
</dbReference>
<dbReference type="InterPro" id="IPR007484">
    <property type="entry name" value="Peptidase_M28"/>
</dbReference>
<dbReference type="PANTHER" id="PTHR12147:SF56">
    <property type="entry name" value="AMINOPEPTIDASE YDR415C-RELATED"/>
    <property type="match status" value="1"/>
</dbReference>
<dbReference type="PANTHER" id="PTHR12147">
    <property type="entry name" value="METALLOPEPTIDASE M28 FAMILY MEMBER"/>
    <property type="match status" value="1"/>
</dbReference>
<dbReference type="Pfam" id="PF04389">
    <property type="entry name" value="Peptidase_M28"/>
    <property type="match status" value="1"/>
</dbReference>
<dbReference type="SUPFAM" id="SSF53187">
    <property type="entry name" value="Zn-dependent exopeptidases"/>
    <property type="match status" value="1"/>
</dbReference>
<keyword id="KW-0031">Aminopeptidase</keyword>
<keyword id="KW-1015">Disulfide bond</keyword>
<keyword id="KW-0325">Glycoprotein</keyword>
<keyword id="KW-0378">Hydrolase</keyword>
<keyword id="KW-0479">Metal-binding</keyword>
<keyword id="KW-0645">Protease</keyword>
<keyword id="KW-0964">Secreted</keyword>
<keyword id="KW-0732">Signal</keyword>
<keyword id="KW-0843">Virulence</keyword>
<keyword id="KW-0862">Zinc</keyword>
<organism>
    <name type="scientific">Trichophyton tonsurans</name>
    <name type="common">Scalp ringworm fungus</name>
    <dbReference type="NCBI Taxonomy" id="34387"/>
    <lineage>
        <taxon>Eukaryota</taxon>
        <taxon>Fungi</taxon>
        <taxon>Dikarya</taxon>
        <taxon>Ascomycota</taxon>
        <taxon>Pezizomycotina</taxon>
        <taxon>Eurotiomycetes</taxon>
        <taxon>Eurotiomycetidae</taxon>
        <taxon>Onygenales</taxon>
        <taxon>Arthrodermataceae</taxon>
        <taxon>Trichophyton</taxon>
    </lineage>
</organism>
<protein>
    <recommendedName>
        <fullName>Probable leucine aminopeptidase 1</fullName>
        <ecNumber>3.4.11.-</ecNumber>
    </recommendedName>
    <alternativeName>
        <fullName>Leucyl aminopeptidase 1</fullName>
        <shortName>LAP1</shortName>
    </alternativeName>
</protein>